<accession>Q18008</accession>
<accession>A0A0K3AVG9</accession>
<comment type="function">
    <text evidence="2">May act as an adapter to facilitate downstream signaling for the receptor complex composed of ilcr-1 and ilcr-2, which is a signaling complex that modulates neuronal activity and animal behavior in response to sensory neuron input.</text>
</comment>
<comment type="subunit">
    <text evidence="2">Interacts with the receptor complex composed of ilcr-1 and ilcr-2. Also interacts with pik-1.</text>
</comment>
<comment type="interaction">
    <interactant intactId="EBI-324674">
        <id>Q18008</id>
    </interactant>
    <interactant intactId="EBI-16877763">
        <id>Q9NA64</id>
        <label>ilcr-1</label>
    </interactant>
    <organismsDiffer>false</organismsDiffer>
    <experiments>2</experiments>
</comment>
<comment type="interaction">
    <interactant intactId="EBI-324674">
        <id>Q18008</id>
    </interactant>
    <interactant intactId="EBI-327172">
        <id>Q10128</id>
        <label>ilcr-2</label>
    </interactant>
    <organismsDiffer>false</organismsDiffer>
    <experiments>2</experiments>
</comment>
<comment type="interaction">
    <interactant intactId="EBI-324674">
        <id>Q18008</id>
    </interactant>
    <interactant intactId="EBI-324661">
        <id>G5ECP4</id>
        <label>pik-1</label>
    </interactant>
    <organismsDiffer>false</organismsDiffer>
    <experiments>3</experiments>
</comment>
<comment type="alternative products">
    <event type="alternative splicing"/>
    <isoform>
        <id>Q18008-1</id>
        <name evidence="6">a</name>
        <sequence type="displayed"/>
    </isoform>
    <isoform>
        <id>Q18008-2</id>
        <name evidence="7">b</name>
        <sequence type="described" ref="VSP_059577"/>
    </isoform>
</comment>
<comment type="tissue specificity">
    <text evidence="4">Expressed in neurons.</text>
</comment>
<organism evidence="5">
    <name type="scientific">Caenorhabditis elegans</name>
    <dbReference type="NCBI Taxonomy" id="6239"/>
    <lineage>
        <taxon>Eukaryota</taxon>
        <taxon>Metazoa</taxon>
        <taxon>Ecdysozoa</taxon>
        <taxon>Nematoda</taxon>
        <taxon>Chromadorea</taxon>
        <taxon>Rhabditida</taxon>
        <taxon>Rhabditina</taxon>
        <taxon>Rhabditomorpha</taxon>
        <taxon>Rhabditoidea</taxon>
        <taxon>Rhabditidae</taxon>
        <taxon>Peloderinae</taxon>
        <taxon>Caenorhabditis</taxon>
    </lineage>
</organism>
<reference evidence="5" key="1">
    <citation type="journal article" date="1998" name="Science">
        <title>Genome sequence of the nematode C. elegans: a platform for investigating biology.</title>
        <authorList>
            <consortium name="The C. elegans sequencing consortium"/>
        </authorList>
    </citation>
    <scope>NUCLEOTIDE SEQUENCE [LARGE SCALE GENOMIC DNA]</scope>
    <source>
        <strain evidence="5">Bristol N2</strain>
    </source>
</reference>
<reference evidence="3" key="2">
    <citation type="journal article" date="2017" name="Nature">
        <title>IL-17 is a neuromodulator of Caenorhabditis elegans sensory responses.</title>
        <authorList>
            <person name="Chen C."/>
            <person name="Itakura E."/>
            <person name="Nelson G.M."/>
            <person name="Sheng M."/>
            <person name="Laurent P."/>
            <person name="Fenk L.A."/>
            <person name="Butcher R.A."/>
            <person name="Hegde R.S."/>
            <person name="de Bono M."/>
        </authorList>
    </citation>
    <scope>FUNCTION</scope>
    <scope>INTERACTION WITH ILCR-1; ILCR-2 AND PIK-1</scope>
    <scope>TISSUE SPECIFICITY</scope>
</reference>
<proteinExistence type="evidence at protein level"/>
<keyword id="KW-0025">Alternative splicing</keyword>
<keyword id="KW-1185">Reference proteome</keyword>
<name>ACTL1_CAEEL</name>
<protein>
    <recommendedName>
        <fullName evidence="6">ACT1-like protein</fullName>
    </recommendedName>
</protein>
<dbReference type="EMBL" id="BX284606">
    <property type="protein sequence ID" value="CCD64569.2"/>
    <property type="molecule type" value="Genomic_DNA"/>
</dbReference>
<dbReference type="EMBL" id="BX284606">
    <property type="protein sequence ID" value="CTQ87027.1"/>
    <property type="molecule type" value="Genomic_DNA"/>
</dbReference>
<dbReference type="RefSeq" id="NP_001300316.1">
    <molecule id="Q18008-2"/>
    <property type="nucleotide sequence ID" value="NM_001313387.4"/>
</dbReference>
<dbReference type="RefSeq" id="NP_509094.3">
    <molecule id="Q18008-1"/>
    <property type="nucleotide sequence ID" value="NM_076693.5"/>
</dbReference>
<dbReference type="SMR" id="Q18008"/>
<dbReference type="DIP" id="DIP-26461N"/>
<dbReference type="FunCoup" id="Q18008">
    <property type="interactions" value="99"/>
</dbReference>
<dbReference type="IntAct" id="Q18008">
    <property type="interactions" value="3"/>
</dbReference>
<dbReference type="STRING" id="6239.C15B12.6a.1"/>
<dbReference type="PaxDb" id="6239-C15B12.6"/>
<dbReference type="PeptideAtlas" id="Q18008"/>
<dbReference type="EnsemblMetazoa" id="C15B12.6a.1">
    <molecule id="Q18008-1"/>
    <property type="protein sequence ID" value="C15B12.6a.1"/>
    <property type="gene ID" value="WBGene00015787"/>
</dbReference>
<dbReference type="EnsemblMetazoa" id="C15B12.6b.1">
    <molecule id="Q18008-2"/>
    <property type="protein sequence ID" value="C15B12.6b.1"/>
    <property type="gene ID" value="WBGene00015787"/>
</dbReference>
<dbReference type="GeneID" id="182629"/>
<dbReference type="KEGG" id="cel:CELE_C15B12.6"/>
<dbReference type="UCSC" id="C15B12.6">
    <molecule id="Q18008-1"/>
    <property type="organism name" value="c. elegans"/>
</dbReference>
<dbReference type="AGR" id="WB:WBGene00015787"/>
<dbReference type="CTD" id="182629"/>
<dbReference type="WormBase" id="C15B12.6a">
    <molecule id="Q18008-1"/>
    <property type="protein sequence ID" value="CE47363"/>
    <property type="gene ID" value="WBGene00015787"/>
    <property type="gene designation" value="actl-1"/>
</dbReference>
<dbReference type="WormBase" id="C15B12.6b">
    <molecule id="Q18008-2"/>
    <property type="protein sequence ID" value="CE50614"/>
    <property type="gene ID" value="WBGene00015787"/>
    <property type="gene designation" value="actl-1"/>
</dbReference>
<dbReference type="eggNOG" id="ENOG502SFCB">
    <property type="taxonomic scope" value="Eukaryota"/>
</dbReference>
<dbReference type="HOGENOM" id="CLU_763412_0_0_1"/>
<dbReference type="InParanoid" id="Q18008"/>
<dbReference type="OMA" id="IMHLRTS"/>
<dbReference type="OrthoDB" id="5784885at2759"/>
<dbReference type="PRO" id="PR:Q18008"/>
<dbReference type="Proteomes" id="UP000001940">
    <property type="component" value="Chromosome X"/>
</dbReference>
<dbReference type="Bgee" id="WBGene00015787">
    <property type="expression patterns" value="Expressed in pharyngeal muscle cell (C elegans) and 3 other cell types or tissues"/>
</dbReference>
<feature type="chain" id="PRO_0000444154" description="ACT1-like protein">
    <location>
        <begin position="1"/>
        <end position="360"/>
    </location>
</feature>
<feature type="region of interest" description="Disordered" evidence="1">
    <location>
        <begin position="339"/>
        <end position="360"/>
    </location>
</feature>
<feature type="splice variant" id="VSP_059577" description="In isoform b." evidence="3">
    <location>
        <begin position="1"/>
        <end position="3"/>
    </location>
</feature>
<sequence length="360" mass="41793">MTKMKMDVTIELDLDGDDWEEVDVLSDKCVEDILEDVHIDDPILVSDVRITLPANIRIKNFKKEIRDLILANLDVPTTVSAGSWQIVSSFLRGIEYSEIGGRERNSKLSWKPFEDMHAQILVNALAYAQRVDILVKLKSYIDSNSYLKNVPEPMFAFADTDSMASTTTFSEYAEPVHSMNARKKILLLHYETTSKEKEDFKWFKCNLKNVLEKERKEGKDLEVFDVKVWEKDDRGNVFQELEKHYDLFPHIVVCFNKSYIEATKPNSKSKMPQFRKSISDKLNVEFHMNGNRNLRGRCVLMSEVEKVTDTYWAAVTNQYPFPGSFEPFVKRLLRDGKVKKQSHNNANDHHEDSMNYSITQ</sequence>
<gene>
    <name evidence="6" type="primary">actl-1</name>
    <name evidence="6" type="ORF">C15B12.6</name>
</gene>
<evidence type="ECO:0000256" key="1">
    <source>
        <dbReference type="SAM" id="MobiDB-lite"/>
    </source>
</evidence>
<evidence type="ECO:0000269" key="2">
    <source>
    </source>
</evidence>
<evidence type="ECO:0000305" key="3"/>
<evidence type="ECO:0000305" key="4">
    <source>
    </source>
</evidence>
<evidence type="ECO:0000312" key="5">
    <source>
        <dbReference type="Proteomes" id="UP000001940"/>
    </source>
</evidence>
<evidence type="ECO:0000312" key="6">
    <source>
        <dbReference type="WormBase" id="C15B12.6a"/>
    </source>
</evidence>
<evidence type="ECO:0000312" key="7">
    <source>
        <dbReference type="WormBase" id="C15B12.6b"/>
    </source>
</evidence>